<proteinExistence type="inferred from homology"/>
<feature type="chain" id="PRO_1000078530" description="Glycine--tRNA ligase alpha subunit">
    <location>
        <begin position="1"/>
        <end position="292"/>
    </location>
</feature>
<gene>
    <name evidence="1" type="primary">glyQ</name>
    <name type="ordered locus">PTH_0899</name>
</gene>
<reference key="1">
    <citation type="journal article" date="2008" name="Genome Res.">
        <title>The genome of Pelotomaculum thermopropionicum reveals niche-associated evolution in anaerobic microbiota.</title>
        <authorList>
            <person name="Kosaka T."/>
            <person name="Kato S."/>
            <person name="Shimoyama T."/>
            <person name="Ishii S."/>
            <person name="Abe T."/>
            <person name="Watanabe K."/>
        </authorList>
    </citation>
    <scope>NUCLEOTIDE SEQUENCE [LARGE SCALE GENOMIC DNA]</scope>
    <source>
        <strain>DSM 13744 / JCM 10971 / SI</strain>
    </source>
</reference>
<organism>
    <name type="scientific">Pelotomaculum thermopropionicum (strain DSM 13744 / JCM 10971 / SI)</name>
    <dbReference type="NCBI Taxonomy" id="370438"/>
    <lineage>
        <taxon>Bacteria</taxon>
        <taxon>Bacillati</taxon>
        <taxon>Bacillota</taxon>
        <taxon>Clostridia</taxon>
        <taxon>Eubacteriales</taxon>
        <taxon>Desulfotomaculaceae</taxon>
        <taxon>Pelotomaculum</taxon>
    </lineage>
</organism>
<keyword id="KW-0030">Aminoacyl-tRNA synthetase</keyword>
<keyword id="KW-0067">ATP-binding</keyword>
<keyword id="KW-0963">Cytoplasm</keyword>
<keyword id="KW-0436">Ligase</keyword>
<keyword id="KW-0547">Nucleotide-binding</keyword>
<keyword id="KW-0648">Protein biosynthesis</keyword>
<keyword id="KW-1185">Reference proteome</keyword>
<accession>A5D3W9</accession>
<name>SYGA_PELTS</name>
<protein>
    <recommendedName>
        <fullName evidence="1">Glycine--tRNA ligase alpha subunit</fullName>
        <ecNumber evidence="1">6.1.1.14</ecNumber>
    </recommendedName>
    <alternativeName>
        <fullName evidence="1">Glycyl-tRNA synthetase alpha subunit</fullName>
        <shortName evidence="1">GlyRS</shortName>
    </alternativeName>
</protein>
<evidence type="ECO:0000255" key="1">
    <source>
        <dbReference type="HAMAP-Rule" id="MF_00254"/>
    </source>
</evidence>
<comment type="catalytic activity">
    <reaction evidence="1">
        <text>tRNA(Gly) + glycine + ATP = glycyl-tRNA(Gly) + AMP + diphosphate</text>
        <dbReference type="Rhea" id="RHEA:16013"/>
        <dbReference type="Rhea" id="RHEA-COMP:9664"/>
        <dbReference type="Rhea" id="RHEA-COMP:9683"/>
        <dbReference type="ChEBI" id="CHEBI:30616"/>
        <dbReference type="ChEBI" id="CHEBI:33019"/>
        <dbReference type="ChEBI" id="CHEBI:57305"/>
        <dbReference type="ChEBI" id="CHEBI:78442"/>
        <dbReference type="ChEBI" id="CHEBI:78522"/>
        <dbReference type="ChEBI" id="CHEBI:456215"/>
        <dbReference type="EC" id="6.1.1.14"/>
    </reaction>
</comment>
<comment type="subunit">
    <text evidence="1">Tetramer of two alpha and two beta subunits.</text>
</comment>
<comment type="subcellular location">
    <subcellularLocation>
        <location evidence="1">Cytoplasm</location>
    </subcellularLocation>
</comment>
<comment type="similarity">
    <text evidence="1">Belongs to the class-II aminoacyl-tRNA synthetase family.</text>
</comment>
<sequence>MNFQELILTLDNFWARQNCIIQQPYDVEKGAGTMNPATFLRALGPEPWRVAYVEPSRRPTDGRYGENPNRLQHYYQYQVILKPSPDDVLEVYLDSLKAIGIDPDEHDIRFVEDNWESPTLGAWGLGWEVWLDGMEVTQFTYFQQCGGIDCRPVSAEITYGLERLAMFIQGVDNVFDITWVDGITYGDVHHRGEVEHSHYNFELADTEMLFKLFDMYEREALRVVEKGFVLPAYDYVLKCSHTFNLLDARGAISVTERTGFIGRVRNLARTCAQAYIEQRQAMGYPLLKRKED</sequence>
<dbReference type="EC" id="6.1.1.14" evidence="1"/>
<dbReference type="EMBL" id="AP009389">
    <property type="protein sequence ID" value="BAF59080.1"/>
    <property type="molecule type" value="Genomic_DNA"/>
</dbReference>
<dbReference type="SMR" id="A5D3W9"/>
<dbReference type="STRING" id="370438.PTH_0899"/>
<dbReference type="KEGG" id="pth:PTH_0899"/>
<dbReference type="eggNOG" id="COG0752">
    <property type="taxonomic scope" value="Bacteria"/>
</dbReference>
<dbReference type="HOGENOM" id="CLU_057066_1_0_9"/>
<dbReference type="Proteomes" id="UP000006556">
    <property type="component" value="Chromosome"/>
</dbReference>
<dbReference type="GO" id="GO:0005829">
    <property type="term" value="C:cytosol"/>
    <property type="evidence" value="ECO:0007669"/>
    <property type="project" value="TreeGrafter"/>
</dbReference>
<dbReference type="GO" id="GO:0005524">
    <property type="term" value="F:ATP binding"/>
    <property type="evidence" value="ECO:0007669"/>
    <property type="project" value="UniProtKB-UniRule"/>
</dbReference>
<dbReference type="GO" id="GO:0140096">
    <property type="term" value="F:catalytic activity, acting on a protein"/>
    <property type="evidence" value="ECO:0007669"/>
    <property type="project" value="UniProtKB-ARBA"/>
</dbReference>
<dbReference type="GO" id="GO:0004820">
    <property type="term" value="F:glycine-tRNA ligase activity"/>
    <property type="evidence" value="ECO:0007669"/>
    <property type="project" value="UniProtKB-UniRule"/>
</dbReference>
<dbReference type="GO" id="GO:0016740">
    <property type="term" value="F:transferase activity"/>
    <property type="evidence" value="ECO:0007669"/>
    <property type="project" value="UniProtKB-ARBA"/>
</dbReference>
<dbReference type="GO" id="GO:0006426">
    <property type="term" value="P:glycyl-tRNA aminoacylation"/>
    <property type="evidence" value="ECO:0007669"/>
    <property type="project" value="UniProtKB-UniRule"/>
</dbReference>
<dbReference type="CDD" id="cd00733">
    <property type="entry name" value="GlyRS_alpha_core"/>
    <property type="match status" value="1"/>
</dbReference>
<dbReference type="FunFam" id="3.30.930.10:FF:000006">
    <property type="entry name" value="Glycine--tRNA ligase alpha subunit"/>
    <property type="match status" value="1"/>
</dbReference>
<dbReference type="Gene3D" id="3.30.930.10">
    <property type="entry name" value="Bira Bifunctional Protein, Domain 2"/>
    <property type="match status" value="1"/>
</dbReference>
<dbReference type="Gene3D" id="1.20.58.180">
    <property type="entry name" value="Class II aaRS and biotin synthetases, domain 2"/>
    <property type="match status" value="1"/>
</dbReference>
<dbReference type="HAMAP" id="MF_00254">
    <property type="entry name" value="Gly_tRNA_synth_alpha"/>
    <property type="match status" value="1"/>
</dbReference>
<dbReference type="InterPro" id="IPR045864">
    <property type="entry name" value="aa-tRNA-synth_II/BPL/LPL"/>
</dbReference>
<dbReference type="InterPro" id="IPR006194">
    <property type="entry name" value="Gly-tRNA-synth_heterodimer"/>
</dbReference>
<dbReference type="InterPro" id="IPR002310">
    <property type="entry name" value="Gly-tRNA_ligase_asu"/>
</dbReference>
<dbReference type="NCBIfam" id="TIGR00388">
    <property type="entry name" value="glyQ"/>
    <property type="match status" value="1"/>
</dbReference>
<dbReference type="NCBIfam" id="NF006827">
    <property type="entry name" value="PRK09348.1"/>
    <property type="match status" value="1"/>
</dbReference>
<dbReference type="PANTHER" id="PTHR30075:SF2">
    <property type="entry name" value="GLYCINE--TRNA LIGASE, CHLOROPLASTIC_MITOCHONDRIAL 2"/>
    <property type="match status" value="1"/>
</dbReference>
<dbReference type="PANTHER" id="PTHR30075">
    <property type="entry name" value="GLYCYL-TRNA SYNTHETASE"/>
    <property type="match status" value="1"/>
</dbReference>
<dbReference type="Pfam" id="PF02091">
    <property type="entry name" value="tRNA-synt_2e"/>
    <property type="match status" value="1"/>
</dbReference>
<dbReference type="PRINTS" id="PR01044">
    <property type="entry name" value="TRNASYNTHGA"/>
</dbReference>
<dbReference type="SUPFAM" id="SSF55681">
    <property type="entry name" value="Class II aaRS and biotin synthetases"/>
    <property type="match status" value="1"/>
</dbReference>
<dbReference type="PROSITE" id="PS50861">
    <property type="entry name" value="AA_TRNA_LIGASE_II_GLYAB"/>
    <property type="match status" value="1"/>
</dbReference>